<organism>
    <name type="scientific">Citrobacter koseri (strain ATCC BAA-895 / CDC 4225-83 / SGSC4696)</name>
    <dbReference type="NCBI Taxonomy" id="290338"/>
    <lineage>
        <taxon>Bacteria</taxon>
        <taxon>Pseudomonadati</taxon>
        <taxon>Pseudomonadota</taxon>
        <taxon>Gammaproteobacteria</taxon>
        <taxon>Enterobacterales</taxon>
        <taxon>Enterobacteriaceae</taxon>
        <taxon>Citrobacter</taxon>
    </lineage>
</organism>
<protein>
    <recommendedName>
        <fullName evidence="1">Putative pre-16S rRNA nuclease</fullName>
        <ecNumber evidence="1">3.1.-.-</ecNumber>
    </recommendedName>
</protein>
<gene>
    <name evidence="1" type="primary">yqgF</name>
    <name type="ordered locus">CKO_04324</name>
</gene>
<name>YQGF_CITK8</name>
<proteinExistence type="inferred from homology"/>
<keyword id="KW-0963">Cytoplasm</keyword>
<keyword id="KW-0378">Hydrolase</keyword>
<keyword id="KW-0540">Nuclease</keyword>
<keyword id="KW-1185">Reference proteome</keyword>
<keyword id="KW-0690">Ribosome biogenesis</keyword>
<reference key="1">
    <citation type="submission" date="2007-08" db="EMBL/GenBank/DDBJ databases">
        <authorList>
            <consortium name="The Citrobacter koseri Genome Sequencing Project"/>
            <person name="McClelland M."/>
            <person name="Sanderson E.K."/>
            <person name="Porwollik S."/>
            <person name="Spieth J."/>
            <person name="Clifton W.S."/>
            <person name="Latreille P."/>
            <person name="Courtney L."/>
            <person name="Wang C."/>
            <person name="Pepin K."/>
            <person name="Bhonagiri V."/>
            <person name="Nash W."/>
            <person name="Johnson M."/>
            <person name="Thiruvilangam P."/>
            <person name="Wilson R."/>
        </authorList>
    </citation>
    <scope>NUCLEOTIDE SEQUENCE [LARGE SCALE GENOMIC DNA]</scope>
    <source>
        <strain>ATCC BAA-895 / CDC 4225-83 / SGSC4696</strain>
    </source>
</reference>
<dbReference type="EC" id="3.1.-.-" evidence="1"/>
<dbReference type="EMBL" id="CP000822">
    <property type="protein sequence ID" value="ABV15381.1"/>
    <property type="molecule type" value="Genomic_DNA"/>
</dbReference>
<dbReference type="RefSeq" id="WP_012135064.1">
    <property type="nucleotide sequence ID" value="NC_009792.1"/>
</dbReference>
<dbReference type="SMR" id="A8APG8"/>
<dbReference type="STRING" id="290338.CKO_04324"/>
<dbReference type="GeneID" id="45137915"/>
<dbReference type="KEGG" id="cko:CKO_04324"/>
<dbReference type="HOGENOM" id="CLU_098240_3_0_6"/>
<dbReference type="OrthoDB" id="9796140at2"/>
<dbReference type="Proteomes" id="UP000008148">
    <property type="component" value="Chromosome"/>
</dbReference>
<dbReference type="GO" id="GO:0005829">
    <property type="term" value="C:cytosol"/>
    <property type="evidence" value="ECO:0007669"/>
    <property type="project" value="TreeGrafter"/>
</dbReference>
<dbReference type="GO" id="GO:0004518">
    <property type="term" value="F:nuclease activity"/>
    <property type="evidence" value="ECO:0007669"/>
    <property type="project" value="UniProtKB-KW"/>
</dbReference>
<dbReference type="GO" id="GO:0000967">
    <property type="term" value="P:rRNA 5'-end processing"/>
    <property type="evidence" value="ECO:0007669"/>
    <property type="project" value="UniProtKB-UniRule"/>
</dbReference>
<dbReference type="CDD" id="cd16964">
    <property type="entry name" value="YqgF"/>
    <property type="match status" value="1"/>
</dbReference>
<dbReference type="FunFam" id="3.30.420.140:FF:000002">
    <property type="entry name" value="Putative pre-16S rRNA nuclease"/>
    <property type="match status" value="1"/>
</dbReference>
<dbReference type="Gene3D" id="3.30.420.140">
    <property type="entry name" value="YqgF/RNase H-like domain"/>
    <property type="match status" value="1"/>
</dbReference>
<dbReference type="HAMAP" id="MF_00651">
    <property type="entry name" value="Nuclease_YqgF"/>
    <property type="match status" value="1"/>
</dbReference>
<dbReference type="InterPro" id="IPR012337">
    <property type="entry name" value="RNaseH-like_sf"/>
</dbReference>
<dbReference type="InterPro" id="IPR005227">
    <property type="entry name" value="YqgF"/>
</dbReference>
<dbReference type="InterPro" id="IPR006641">
    <property type="entry name" value="YqgF/RNaseH-like_dom"/>
</dbReference>
<dbReference type="InterPro" id="IPR037027">
    <property type="entry name" value="YqgF/RNaseH-like_dom_sf"/>
</dbReference>
<dbReference type="NCBIfam" id="TIGR00250">
    <property type="entry name" value="RNAse_H_YqgF"/>
    <property type="match status" value="1"/>
</dbReference>
<dbReference type="PANTHER" id="PTHR33317">
    <property type="entry name" value="POLYNUCLEOTIDYL TRANSFERASE, RIBONUCLEASE H-LIKE SUPERFAMILY PROTEIN"/>
    <property type="match status" value="1"/>
</dbReference>
<dbReference type="PANTHER" id="PTHR33317:SF4">
    <property type="entry name" value="POLYNUCLEOTIDYL TRANSFERASE, RIBONUCLEASE H-LIKE SUPERFAMILY PROTEIN"/>
    <property type="match status" value="1"/>
</dbReference>
<dbReference type="Pfam" id="PF03652">
    <property type="entry name" value="RuvX"/>
    <property type="match status" value="1"/>
</dbReference>
<dbReference type="SMART" id="SM00732">
    <property type="entry name" value="YqgFc"/>
    <property type="match status" value="1"/>
</dbReference>
<dbReference type="SUPFAM" id="SSF53098">
    <property type="entry name" value="Ribonuclease H-like"/>
    <property type="match status" value="1"/>
</dbReference>
<sequence>MSGTLLAFDFGTKSIGVAIGQRITGTARALPAIKAQDGTPDWNIIERLLKEWQPDEIIVGLPLNMDGTEQPLTARARKFANRIHGRFGVLVTLHDERLSTIEARSGLFEQGGYRALNKGKVDSASAVIILESYFEQGY</sequence>
<feature type="chain" id="PRO_1000061502" description="Putative pre-16S rRNA nuclease">
    <location>
        <begin position="1"/>
        <end position="138"/>
    </location>
</feature>
<comment type="function">
    <text evidence="1">Could be a nuclease involved in processing of the 5'-end of pre-16S rRNA.</text>
</comment>
<comment type="subcellular location">
    <subcellularLocation>
        <location evidence="1">Cytoplasm</location>
    </subcellularLocation>
</comment>
<comment type="similarity">
    <text evidence="1">Belongs to the YqgF nuclease family.</text>
</comment>
<accession>A8APG8</accession>
<evidence type="ECO:0000255" key="1">
    <source>
        <dbReference type="HAMAP-Rule" id="MF_00651"/>
    </source>
</evidence>